<name>SYY_LISMF</name>
<evidence type="ECO:0000255" key="1">
    <source>
        <dbReference type="HAMAP-Rule" id="MF_02006"/>
    </source>
</evidence>
<dbReference type="EC" id="6.1.1.1" evidence="1"/>
<dbReference type="EMBL" id="AE017262">
    <property type="protein sequence ID" value="AAT04394.1"/>
    <property type="molecule type" value="Genomic_DNA"/>
</dbReference>
<dbReference type="RefSeq" id="WP_003726008.1">
    <property type="nucleotide sequence ID" value="NC_002973.6"/>
</dbReference>
<dbReference type="SMR" id="Q71Z70"/>
<dbReference type="KEGG" id="lmf:LMOf2365_1619"/>
<dbReference type="HOGENOM" id="CLU_024003_0_3_9"/>
<dbReference type="GO" id="GO:0005829">
    <property type="term" value="C:cytosol"/>
    <property type="evidence" value="ECO:0007669"/>
    <property type="project" value="TreeGrafter"/>
</dbReference>
<dbReference type="GO" id="GO:0005524">
    <property type="term" value="F:ATP binding"/>
    <property type="evidence" value="ECO:0007669"/>
    <property type="project" value="UniProtKB-UniRule"/>
</dbReference>
<dbReference type="GO" id="GO:0003723">
    <property type="term" value="F:RNA binding"/>
    <property type="evidence" value="ECO:0007669"/>
    <property type="project" value="UniProtKB-KW"/>
</dbReference>
<dbReference type="GO" id="GO:0004831">
    <property type="term" value="F:tyrosine-tRNA ligase activity"/>
    <property type="evidence" value="ECO:0007669"/>
    <property type="project" value="UniProtKB-UniRule"/>
</dbReference>
<dbReference type="GO" id="GO:0006437">
    <property type="term" value="P:tyrosyl-tRNA aminoacylation"/>
    <property type="evidence" value="ECO:0007669"/>
    <property type="project" value="UniProtKB-UniRule"/>
</dbReference>
<dbReference type="CDD" id="cd00165">
    <property type="entry name" value="S4"/>
    <property type="match status" value="1"/>
</dbReference>
<dbReference type="CDD" id="cd00805">
    <property type="entry name" value="TyrRS_core"/>
    <property type="match status" value="1"/>
</dbReference>
<dbReference type="FunFam" id="1.10.240.10:FF:000001">
    <property type="entry name" value="Tyrosine--tRNA ligase"/>
    <property type="match status" value="1"/>
</dbReference>
<dbReference type="FunFam" id="3.10.290.10:FF:000012">
    <property type="entry name" value="Tyrosine--tRNA ligase"/>
    <property type="match status" value="1"/>
</dbReference>
<dbReference type="FunFam" id="3.40.50.620:FF:000008">
    <property type="entry name" value="Tyrosine--tRNA ligase"/>
    <property type="match status" value="1"/>
</dbReference>
<dbReference type="Gene3D" id="3.40.50.620">
    <property type="entry name" value="HUPs"/>
    <property type="match status" value="1"/>
</dbReference>
<dbReference type="Gene3D" id="3.10.290.10">
    <property type="entry name" value="RNA-binding S4 domain"/>
    <property type="match status" value="1"/>
</dbReference>
<dbReference type="Gene3D" id="1.10.240.10">
    <property type="entry name" value="Tyrosyl-Transfer RNA Synthetase"/>
    <property type="match status" value="1"/>
</dbReference>
<dbReference type="HAMAP" id="MF_02006">
    <property type="entry name" value="Tyr_tRNA_synth_type1"/>
    <property type="match status" value="1"/>
</dbReference>
<dbReference type="InterPro" id="IPR001412">
    <property type="entry name" value="aa-tRNA-synth_I_CS"/>
</dbReference>
<dbReference type="InterPro" id="IPR002305">
    <property type="entry name" value="aa-tRNA-synth_Ic"/>
</dbReference>
<dbReference type="InterPro" id="IPR014729">
    <property type="entry name" value="Rossmann-like_a/b/a_fold"/>
</dbReference>
<dbReference type="InterPro" id="IPR002942">
    <property type="entry name" value="S4_RNA-bd"/>
</dbReference>
<dbReference type="InterPro" id="IPR036986">
    <property type="entry name" value="S4_RNA-bd_sf"/>
</dbReference>
<dbReference type="InterPro" id="IPR054608">
    <property type="entry name" value="SYY-like_C"/>
</dbReference>
<dbReference type="InterPro" id="IPR002307">
    <property type="entry name" value="Tyr-tRNA-ligase"/>
</dbReference>
<dbReference type="InterPro" id="IPR024088">
    <property type="entry name" value="Tyr-tRNA-ligase_bac-type"/>
</dbReference>
<dbReference type="InterPro" id="IPR024107">
    <property type="entry name" value="Tyr-tRNA-ligase_bac_1"/>
</dbReference>
<dbReference type="NCBIfam" id="TIGR00234">
    <property type="entry name" value="tyrS"/>
    <property type="match status" value="1"/>
</dbReference>
<dbReference type="PANTHER" id="PTHR11766:SF0">
    <property type="entry name" value="TYROSINE--TRNA LIGASE, MITOCHONDRIAL"/>
    <property type="match status" value="1"/>
</dbReference>
<dbReference type="PANTHER" id="PTHR11766">
    <property type="entry name" value="TYROSYL-TRNA SYNTHETASE"/>
    <property type="match status" value="1"/>
</dbReference>
<dbReference type="Pfam" id="PF22421">
    <property type="entry name" value="SYY_C-terminal"/>
    <property type="match status" value="1"/>
</dbReference>
<dbReference type="Pfam" id="PF00579">
    <property type="entry name" value="tRNA-synt_1b"/>
    <property type="match status" value="1"/>
</dbReference>
<dbReference type="PRINTS" id="PR01040">
    <property type="entry name" value="TRNASYNTHTYR"/>
</dbReference>
<dbReference type="SMART" id="SM00363">
    <property type="entry name" value="S4"/>
    <property type="match status" value="1"/>
</dbReference>
<dbReference type="SUPFAM" id="SSF55174">
    <property type="entry name" value="Alpha-L RNA-binding motif"/>
    <property type="match status" value="1"/>
</dbReference>
<dbReference type="SUPFAM" id="SSF52374">
    <property type="entry name" value="Nucleotidylyl transferase"/>
    <property type="match status" value="1"/>
</dbReference>
<dbReference type="PROSITE" id="PS00178">
    <property type="entry name" value="AA_TRNA_LIGASE_I"/>
    <property type="match status" value="1"/>
</dbReference>
<dbReference type="PROSITE" id="PS50889">
    <property type="entry name" value="S4"/>
    <property type="match status" value="1"/>
</dbReference>
<reference key="1">
    <citation type="journal article" date="2004" name="Nucleic Acids Res.">
        <title>Whole genome comparisons of serotype 4b and 1/2a strains of the food-borne pathogen Listeria monocytogenes reveal new insights into the core genome components of this species.</title>
        <authorList>
            <person name="Nelson K.E."/>
            <person name="Fouts D.E."/>
            <person name="Mongodin E.F."/>
            <person name="Ravel J."/>
            <person name="DeBoy R.T."/>
            <person name="Kolonay J.F."/>
            <person name="Rasko D.A."/>
            <person name="Angiuoli S.V."/>
            <person name="Gill S.R."/>
            <person name="Paulsen I.T."/>
            <person name="Peterson J.D."/>
            <person name="White O."/>
            <person name="Nelson W.C."/>
            <person name="Nierman W.C."/>
            <person name="Beanan M.J."/>
            <person name="Brinkac L.M."/>
            <person name="Daugherty S.C."/>
            <person name="Dodson R.J."/>
            <person name="Durkin A.S."/>
            <person name="Madupu R."/>
            <person name="Haft D.H."/>
            <person name="Selengut J."/>
            <person name="Van Aken S.E."/>
            <person name="Khouri H.M."/>
            <person name="Fedorova N."/>
            <person name="Forberger H.A."/>
            <person name="Tran B."/>
            <person name="Kathariou S."/>
            <person name="Wonderling L.D."/>
            <person name="Uhlich G.A."/>
            <person name="Bayles D.O."/>
            <person name="Luchansky J.B."/>
            <person name="Fraser C.M."/>
        </authorList>
    </citation>
    <scope>NUCLEOTIDE SEQUENCE [LARGE SCALE GENOMIC DNA]</scope>
    <source>
        <strain>F2365</strain>
    </source>
</reference>
<proteinExistence type="inferred from homology"/>
<comment type="function">
    <text evidence="1">Catalyzes the attachment of tyrosine to tRNA(Tyr) in a two-step reaction: tyrosine is first activated by ATP to form Tyr-AMP and then transferred to the acceptor end of tRNA(Tyr).</text>
</comment>
<comment type="catalytic activity">
    <reaction evidence="1">
        <text>tRNA(Tyr) + L-tyrosine + ATP = L-tyrosyl-tRNA(Tyr) + AMP + diphosphate + H(+)</text>
        <dbReference type="Rhea" id="RHEA:10220"/>
        <dbReference type="Rhea" id="RHEA-COMP:9706"/>
        <dbReference type="Rhea" id="RHEA-COMP:9707"/>
        <dbReference type="ChEBI" id="CHEBI:15378"/>
        <dbReference type="ChEBI" id="CHEBI:30616"/>
        <dbReference type="ChEBI" id="CHEBI:33019"/>
        <dbReference type="ChEBI" id="CHEBI:58315"/>
        <dbReference type="ChEBI" id="CHEBI:78442"/>
        <dbReference type="ChEBI" id="CHEBI:78536"/>
        <dbReference type="ChEBI" id="CHEBI:456215"/>
        <dbReference type="EC" id="6.1.1.1"/>
    </reaction>
</comment>
<comment type="subunit">
    <text evidence="1">Homodimer.</text>
</comment>
<comment type="subcellular location">
    <subcellularLocation>
        <location evidence="1">Cytoplasm</location>
    </subcellularLocation>
</comment>
<comment type="similarity">
    <text evidence="1">Belongs to the class-I aminoacyl-tRNA synthetase family. TyrS type 1 subfamily.</text>
</comment>
<organism>
    <name type="scientific">Listeria monocytogenes serotype 4b (strain F2365)</name>
    <dbReference type="NCBI Taxonomy" id="265669"/>
    <lineage>
        <taxon>Bacteria</taxon>
        <taxon>Bacillati</taxon>
        <taxon>Bacillota</taxon>
        <taxon>Bacilli</taxon>
        <taxon>Bacillales</taxon>
        <taxon>Listeriaceae</taxon>
        <taxon>Listeria</taxon>
    </lineage>
</organism>
<sequence>MNIIDELEWRGAIYQQTDEEGLRKWVEEKQISLYCGIDPSGDSMHIGHLIPFMILRRFQNAGHRPIILVGGATGTIGDPSGKKEERKLQSMEQISKNVESLRVQLGKIFDFEGNSAASMVNNYDWTKDVSILDFLRDYGKEFNVNTMLSKDIVASRLEVGISFTEFAYQILQAMDFNHLYEFNDCRLQIGGSDQWGNITAGLDLIRKKQGENAKAFGLTIPLLTKADGTKFGKSEGGAIWLNPEKTTPYEFYQFWINTDDRDVVKYLKYFTFLTEAEIDELAKQVETEPHLRAAQKTLAAEMTKFVHSEEALEQALKISKALFSGDVKALTADEIEQGFKDVPTFVAEDTEANLVDWLVTLGIEPSKRQAREDVANGAIYINGERQQDLEKIMDASDRIENKFTIVRRGKKKYFLVSYK</sequence>
<accession>Q71Z70</accession>
<keyword id="KW-0030">Aminoacyl-tRNA synthetase</keyword>
<keyword id="KW-0067">ATP-binding</keyword>
<keyword id="KW-0963">Cytoplasm</keyword>
<keyword id="KW-0436">Ligase</keyword>
<keyword id="KW-0547">Nucleotide-binding</keyword>
<keyword id="KW-0648">Protein biosynthesis</keyword>
<keyword id="KW-0694">RNA-binding</keyword>
<feature type="chain" id="PRO_0000234724" description="Tyrosine--tRNA ligase">
    <location>
        <begin position="1"/>
        <end position="419"/>
    </location>
</feature>
<feature type="domain" description="S4 RNA-binding" evidence="1">
    <location>
        <begin position="352"/>
        <end position="418"/>
    </location>
</feature>
<feature type="short sequence motif" description="'HIGH' region">
    <location>
        <begin position="39"/>
        <end position="48"/>
    </location>
</feature>
<feature type="short sequence motif" description="'KMSKS' region">
    <location>
        <begin position="230"/>
        <end position="234"/>
    </location>
</feature>
<feature type="binding site" evidence="1">
    <location>
        <position position="34"/>
    </location>
    <ligand>
        <name>L-tyrosine</name>
        <dbReference type="ChEBI" id="CHEBI:58315"/>
    </ligand>
</feature>
<feature type="binding site" evidence="1">
    <location>
        <position position="168"/>
    </location>
    <ligand>
        <name>L-tyrosine</name>
        <dbReference type="ChEBI" id="CHEBI:58315"/>
    </ligand>
</feature>
<feature type="binding site" evidence="1">
    <location>
        <position position="172"/>
    </location>
    <ligand>
        <name>L-tyrosine</name>
        <dbReference type="ChEBI" id="CHEBI:58315"/>
    </ligand>
</feature>
<feature type="binding site" evidence="1">
    <location>
        <position position="233"/>
    </location>
    <ligand>
        <name>ATP</name>
        <dbReference type="ChEBI" id="CHEBI:30616"/>
    </ligand>
</feature>
<protein>
    <recommendedName>
        <fullName evidence="1">Tyrosine--tRNA ligase</fullName>
        <ecNumber evidence="1">6.1.1.1</ecNumber>
    </recommendedName>
    <alternativeName>
        <fullName evidence="1">Tyrosyl-tRNA synthetase</fullName>
        <shortName evidence="1">TyrRS</shortName>
    </alternativeName>
</protein>
<gene>
    <name evidence="1" type="primary">tyrS</name>
    <name type="ordered locus">LMOf2365_1619</name>
</gene>